<comment type="function">
    <text evidence="1">Catalyzes the conversion of lactate to pyruvate.</text>
</comment>
<comment type="catalytic activity">
    <reaction evidence="1">
        <text>(S)-lactate + NAD(+) = pyruvate + NADH + H(+)</text>
        <dbReference type="Rhea" id="RHEA:23444"/>
        <dbReference type="ChEBI" id="CHEBI:15361"/>
        <dbReference type="ChEBI" id="CHEBI:15378"/>
        <dbReference type="ChEBI" id="CHEBI:16651"/>
        <dbReference type="ChEBI" id="CHEBI:57540"/>
        <dbReference type="ChEBI" id="CHEBI:57945"/>
        <dbReference type="EC" id="1.1.1.27"/>
    </reaction>
</comment>
<comment type="activity regulation">
    <text evidence="1">Allosterically activated by fructose 1,6-bisphosphate (FBP).</text>
</comment>
<comment type="pathway">
    <text evidence="1">Fermentation; pyruvate fermentation to lactate; (S)-lactate from pyruvate: step 1/1.</text>
</comment>
<comment type="subunit">
    <text evidence="1">Homotetramer.</text>
</comment>
<comment type="subcellular location">
    <subcellularLocation>
        <location evidence="1">Cytoplasm</location>
    </subcellularLocation>
</comment>
<comment type="similarity">
    <text evidence="1">Belongs to the LDH/MDH superfamily. LDH family.</text>
</comment>
<reference key="1">
    <citation type="submission" date="2008-01" db="EMBL/GenBank/DDBJ databases">
        <title>Complete sequence of Thermoanaerobacter sp. X514.</title>
        <authorList>
            <consortium name="US DOE Joint Genome Institute"/>
            <person name="Copeland A."/>
            <person name="Lucas S."/>
            <person name="Lapidus A."/>
            <person name="Barry K."/>
            <person name="Glavina del Rio T."/>
            <person name="Dalin E."/>
            <person name="Tice H."/>
            <person name="Pitluck S."/>
            <person name="Bruce D."/>
            <person name="Goodwin L."/>
            <person name="Saunders E."/>
            <person name="Brettin T."/>
            <person name="Detter J.C."/>
            <person name="Han C."/>
            <person name="Schmutz J."/>
            <person name="Larimer F."/>
            <person name="Land M."/>
            <person name="Hauser L."/>
            <person name="Kyrpides N."/>
            <person name="Kim E."/>
            <person name="Hemme C."/>
            <person name="Fields M.W."/>
            <person name="He Z."/>
            <person name="Zhou J."/>
            <person name="Richardson P."/>
        </authorList>
    </citation>
    <scope>NUCLEOTIDE SEQUENCE [LARGE SCALE GENOMIC DNA]</scope>
    <source>
        <strain>X514</strain>
    </source>
</reference>
<sequence length="311" mass="33715">MNKISIIGSGFVGATTAYTLALSGIAKTIVLIDINKDKAEGDALDISHGVPFISPVELYAGDYSDVSGSDIIIITAGAAQKPGETRLDLVKRNTMIFKDIVAKLIKVNDTAIYLIVTNPVDILTYVTYKISGLPYGRVLGSGTVLDSARFRYLLSKHCNIDPRNIHGYIIGEHGDSELAAWSITNIAGIPIDNYCNLCGKACEKDFREEIFNNVVRAAYTIIEKKGATYYAVALAVRRIVEAIFRDENSILTVSSPLTGQYGVTNVALSLPSVVGRNGIVNILELPLSQEEIAAFRRSAEVIKSVIQELDI</sequence>
<accession>B0K226</accession>
<proteinExistence type="inferred from homology"/>
<name>LDH_THEPX</name>
<organism>
    <name type="scientific">Thermoanaerobacter sp. (strain X514)</name>
    <dbReference type="NCBI Taxonomy" id="399726"/>
    <lineage>
        <taxon>Bacteria</taxon>
        <taxon>Bacillati</taxon>
        <taxon>Bacillota</taxon>
        <taxon>Clostridia</taxon>
        <taxon>Thermoanaerobacterales</taxon>
        <taxon>Thermoanaerobacteraceae</taxon>
        <taxon>Thermoanaerobacter</taxon>
    </lineage>
</organism>
<gene>
    <name evidence="1" type="primary">ldh</name>
    <name type="ordered locus">Teth514_0216</name>
</gene>
<keyword id="KW-0021">Allosteric enzyme</keyword>
<keyword id="KW-0963">Cytoplasm</keyword>
<keyword id="KW-0520">NAD</keyword>
<keyword id="KW-0560">Oxidoreductase</keyword>
<keyword id="KW-0597">Phosphoprotein</keyword>
<protein>
    <recommendedName>
        <fullName evidence="1">L-lactate dehydrogenase</fullName>
        <shortName evidence="1">L-LDH</shortName>
        <ecNumber evidence="1">1.1.1.27</ecNumber>
    </recommendedName>
</protein>
<evidence type="ECO:0000255" key="1">
    <source>
        <dbReference type="HAMAP-Rule" id="MF_00488"/>
    </source>
</evidence>
<feature type="chain" id="PRO_1000126163" description="L-lactate dehydrogenase">
    <location>
        <begin position="1"/>
        <end position="311"/>
    </location>
</feature>
<feature type="active site" description="Proton acceptor" evidence="1">
    <location>
        <position position="173"/>
    </location>
</feature>
<feature type="binding site" evidence="1">
    <location>
        <position position="12"/>
    </location>
    <ligand>
        <name>NAD(+)</name>
        <dbReference type="ChEBI" id="CHEBI:57540"/>
    </ligand>
</feature>
<feature type="binding site" evidence="1">
    <location>
        <position position="33"/>
    </location>
    <ligand>
        <name>NAD(+)</name>
        <dbReference type="ChEBI" id="CHEBI:57540"/>
    </ligand>
</feature>
<feature type="binding site" evidence="1">
    <location>
        <position position="38"/>
    </location>
    <ligand>
        <name>NAD(+)</name>
        <dbReference type="ChEBI" id="CHEBI:57540"/>
    </ligand>
</feature>
<feature type="binding site" evidence="1">
    <location>
        <position position="63"/>
    </location>
    <ligand>
        <name>NAD(+)</name>
        <dbReference type="ChEBI" id="CHEBI:57540"/>
    </ligand>
</feature>
<feature type="binding site" evidence="1">
    <location>
        <begin position="77"/>
        <end position="78"/>
    </location>
    <ligand>
        <name>NAD(+)</name>
        <dbReference type="ChEBI" id="CHEBI:57540"/>
    </ligand>
</feature>
<feature type="binding site" evidence="1">
    <location>
        <position position="80"/>
    </location>
    <ligand>
        <name>substrate</name>
    </ligand>
</feature>
<feature type="binding site" evidence="1">
    <location>
        <position position="86"/>
    </location>
    <ligand>
        <name>substrate</name>
    </ligand>
</feature>
<feature type="binding site" evidence="1">
    <location>
        <begin position="116"/>
        <end position="118"/>
    </location>
    <ligand>
        <name>NAD(+)</name>
        <dbReference type="ChEBI" id="CHEBI:57540"/>
    </ligand>
</feature>
<feature type="binding site" evidence="1">
    <location>
        <begin position="118"/>
        <end position="121"/>
    </location>
    <ligand>
        <name>substrate</name>
    </ligand>
</feature>
<feature type="binding site" evidence="1">
    <location>
        <position position="141"/>
    </location>
    <ligand>
        <name>NAD(+)</name>
        <dbReference type="ChEBI" id="CHEBI:57540"/>
    </ligand>
</feature>
<feature type="binding site" evidence="1">
    <location>
        <begin position="146"/>
        <end position="149"/>
    </location>
    <ligand>
        <name>substrate</name>
    </ligand>
</feature>
<feature type="binding site" evidence="1">
    <location>
        <position position="151"/>
    </location>
    <ligand>
        <name>beta-D-fructose 1,6-bisphosphate</name>
        <dbReference type="ChEBI" id="CHEBI:32966"/>
        <note>allosteric activator</note>
    </ligand>
</feature>
<feature type="binding site" evidence="1">
    <location>
        <position position="166"/>
    </location>
    <ligand>
        <name>beta-D-fructose 1,6-bisphosphate</name>
        <dbReference type="ChEBI" id="CHEBI:32966"/>
        <note>allosteric activator</note>
    </ligand>
</feature>
<feature type="binding site" evidence="1">
    <location>
        <position position="228"/>
    </location>
    <ligand>
        <name>substrate</name>
    </ligand>
</feature>
<feature type="modified residue" description="Phosphotyrosine" evidence="1">
    <location>
        <position position="219"/>
    </location>
</feature>
<dbReference type="EC" id="1.1.1.27" evidence="1"/>
<dbReference type="EMBL" id="CP000923">
    <property type="protein sequence ID" value="ABY91534.1"/>
    <property type="molecule type" value="Genomic_DNA"/>
</dbReference>
<dbReference type="RefSeq" id="WP_003867072.1">
    <property type="nucleotide sequence ID" value="NC_010320.1"/>
</dbReference>
<dbReference type="SMR" id="B0K226"/>
<dbReference type="KEGG" id="tex:Teth514_0216"/>
<dbReference type="HOGENOM" id="CLU_045401_1_1_9"/>
<dbReference type="UniPathway" id="UPA00554">
    <property type="reaction ID" value="UER00611"/>
</dbReference>
<dbReference type="Proteomes" id="UP000002155">
    <property type="component" value="Chromosome"/>
</dbReference>
<dbReference type="GO" id="GO:0005737">
    <property type="term" value="C:cytoplasm"/>
    <property type="evidence" value="ECO:0007669"/>
    <property type="project" value="UniProtKB-SubCell"/>
</dbReference>
<dbReference type="GO" id="GO:0004459">
    <property type="term" value="F:L-lactate dehydrogenase activity"/>
    <property type="evidence" value="ECO:0007669"/>
    <property type="project" value="UniProtKB-UniRule"/>
</dbReference>
<dbReference type="GO" id="GO:0006096">
    <property type="term" value="P:glycolytic process"/>
    <property type="evidence" value="ECO:0007669"/>
    <property type="project" value="UniProtKB-UniRule"/>
</dbReference>
<dbReference type="GO" id="GO:0006089">
    <property type="term" value="P:lactate metabolic process"/>
    <property type="evidence" value="ECO:0007669"/>
    <property type="project" value="TreeGrafter"/>
</dbReference>
<dbReference type="CDD" id="cd05292">
    <property type="entry name" value="LDH_2"/>
    <property type="match status" value="1"/>
</dbReference>
<dbReference type="FunFam" id="3.40.50.720:FF:000018">
    <property type="entry name" value="Malate dehydrogenase"/>
    <property type="match status" value="1"/>
</dbReference>
<dbReference type="Gene3D" id="3.90.110.10">
    <property type="entry name" value="Lactate dehydrogenase/glycoside hydrolase, family 4, C-terminal"/>
    <property type="match status" value="1"/>
</dbReference>
<dbReference type="Gene3D" id="3.40.50.720">
    <property type="entry name" value="NAD(P)-binding Rossmann-like Domain"/>
    <property type="match status" value="1"/>
</dbReference>
<dbReference type="HAMAP" id="MF_00488">
    <property type="entry name" value="Lactate_dehydrog"/>
    <property type="match status" value="1"/>
</dbReference>
<dbReference type="InterPro" id="IPR001557">
    <property type="entry name" value="L-lactate/malate_DH"/>
</dbReference>
<dbReference type="InterPro" id="IPR011304">
    <property type="entry name" value="L-lactate_DH"/>
</dbReference>
<dbReference type="InterPro" id="IPR018177">
    <property type="entry name" value="L-lactate_DH_AS"/>
</dbReference>
<dbReference type="InterPro" id="IPR022383">
    <property type="entry name" value="Lactate/malate_DH_C"/>
</dbReference>
<dbReference type="InterPro" id="IPR001236">
    <property type="entry name" value="Lactate/malate_DH_N"/>
</dbReference>
<dbReference type="InterPro" id="IPR015955">
    <property type="entry name" value="Lactate_DH/Glyco_Ohase_4_C"/>
</dbReference>
<dbReference type="InterPro" id="IPR036291">
    <property type="entry name" value="NAD(P)-bd_dom_sf"/>
</dbReference>
<dbReference type="NCBIfam" id="TIGR01771">
    <property type="entry name" value="L-LDH-NAD"/>
    <property type="match status" value="1"/>
</dbReference>
<dbReference type="NCBIfam" id="NF000824">
    <property type="entry name" value="PRK00066.1"/>
    <property type="match status" value="1"/>
</dbReference>
<dbReference type="NCBIfam" id="NF004863">
    <property type="entry name" value="PRK06223.1"/>
    <property type="match status" value="1"/>
</dbReference>
<dbReference type="PANTHER" id="PTHR43128">
    <property type="entry name" value="L-2-HYDROXYCARBOXYLATE DEHYDROGENASE (NAD(P)(+))"/>
    <property type="match status" value="1"/>
</dbReference>
<dbReference type="PANTHER" id="PTHR43128:SF16">
    <property type="entry name" value="L-LACTATE DEHYDROGENASE"/>
    <property type="match status" value="1"/>
</dbReference>
<dbReference type="Pfam" id="PF02866">
    <property type="entry name" value="Ldh_1_C"/>
    <property type="match status" value="1"/>
</dbReference>
<dbReference type="Pfam" id="PF00056">
    <property type="entry name" value="Ldh_1_N"/>
    <property type="match status" value="1"/>
</dbReference>
<dbReference type="PIRSF" id="PIRSF000102">
    <property type="entry name" value="Lac_mal_DH"/>
    <property type="match status" value="1"/>
</dbReference>
<dbReference type="PRINTS" id="PR00086">
    <property type="entry name" value="LLDHDRGNASE"/>
</dbReference>
<dbReference type="SUPFAM" id="SSF56327">
    <property type="entry name" value="LDH C-terminal domain-like"/>
    <property type="match status" value="1"/>
</dbReference>
<dbReference type="SUPFAM" id="SSF51735">
    <property type="entry name" value="NAD(P)-binding Rossmann-fold domains"/>
    <property type="match status" value="1"/>
</dbReference>
<dbReference type="PROSITE" id="PS00064">
    <property type="entry name" value="L_LDH"/>
    <property type="match status" value="1"/>
</dbReference>